<name>MVP_CMVTR</name>
<organismHost>
    <name type="scientific">Cucumis sativus</name>
    <name type="common">Cucumber</name>
    <dbReference type="NCBI Taxonomy" id="3659"/>
</organismHost>
<organismHost>
    <name type="scientific">Solanum lycopersicum</name>
    <name type="common">Tomato</name>
    <name type="synonym">Lycopersicon esculentum</name>
    <dbReference type="NCBI Taxonomy" id="4081"/>
</organismHost>
<organismHost>
    <name type="scientific">Spinacia oleracea</name>
    <name type="common">Spinach</name>
    <dbReference type="NCBI Taxonomy" id="3562"/>
</organismHost>
<sequence length="279" mass="30362">MAFQGTSRTLTQQSSAASSDDLQKILFSPDAIKKMATECDLGRHHWMRADNAISVRPLVPQVTSNNLLSFFKSGYDAGELRSKGYMSVPQVLCAVTRTVSTDAEGSLKIYLADLGDKELSPIDGQCVTLHNHELPALISFQPTYDCPMELVGNRHRCFAVVVERHGYIGYGGTTASVCSNWQAQFSSKNNNYTHAAAGKTLVLPYNRLAEHSKPSAVARLLKSQLNNVSSSRYLLPNVALNQNASGHESEILNESPPFAIGSPSASRNNSFRSQVVNGL</sequence>
<accession>Q83252</accession>
<proteinExistence type="evidence at transcript level"/>
<reference key="1">
    <citation type="journal article" date="1994" name="Virus Res.">
        <title>Complete nucleotide sequence of the RNA 3 from subgroup II of cucumber mosaic virus (CMV) strain: Trk7.</title>
        <authorList>
            <person name="Salanki K."/>
            <person name="Thole V."/>
            <person name="Balazs E."/>
            <person name="Burgyan J."/>
        </authorList>
    </citation>
    <scope>NUCLEOTIDE SEQUENCE [MRNA]</scope>
</reference>
<keyword id="KW-1031">Host cell junction</keyword>
<keyword id="KW-0813">Transport</keyword>
<keyword id="KW-0916">Viral movement protein</keyword>
<evidence type="ECO:0000250" key="1"/>
<evidence type="ECO:0000256" key="2">
    <source>
        <dbReference type="SAM" id="MobiDB-lite"/>
    </source>
</evidence>
<evidence type="ECO:0000305" key="3"/>
<dbReference type="EMBL" id="L15336">
    <property type="protein sequence ID" value="AAA20883.1"/>
    <property type="molecule type" value="mRNA"/>
</dbReference>
<dbReference type="GO" id="GO:0044219">
    <property type="term" value="C:host cell plasmodesma"/>
    <property type="evidence" value="ECO:0007669"/>
    <property type="project" value="UniProtKB-SubCell"/>
</dbReference>
<dbReference type="GO" id="GO:0046740">
    <property type="term" value="P:transport of virus in host, cell to cell"/>
    <property type="evidence" value="ECO:0007669"/>
    <property type="project" value="UniProtKB-KW"/>
</dbReference>
<dbReference type="InterPro" id="IPR000603">
    <property type="entry name" value="MPV"/>
</dbReference>
<dbReference type="Pfam" id="PF00803">
    <property type="entry name" value="3A"/>
    <property type="match status" value="1"/>
</dbReference>
<comment type="function">
    <text evidence="1">Transports viral genome to neighboring plant cells directly through plasmosdesmata, without any budding. The movement protein allows efficient cell to cell propagation, by bypassing the host cell wall barrier. Acts by forming a tubular structure at the host plasmodesmata, enlarging it enough to allow free passage of virion capsids (By similarity).</text>
</comment>
<comment type="subcellular location">
    <subcellularLocation>
        <location evidence="1">Host cell junction</location>
        <location evidence="1">Host plasmodesma</location>
    </subcellularLocation>
    <text evidence="1">Assembles into long tubular structures at the surface of the infected protoplast.</text>
</comment>
<comment type="similarity">
    <text evidence="3">Belongs to the cucumovirus movement protein family.</text>
</comment>
<feature type="chain" id="PRO_0000083249" description="Movement protein">
    <location>
        <begin position="1"/>
        <end position="279"/>
    </location>
</feature>
<feature type="region of interest" description="Disordered" evidence="2">
    <location>
        <begin position="255"/>
        <end position="279"/>
    </location>
</feature>
<feature type="compositionally biased region" description="Polar residues" evidence="2">
    <location>
        <begin position="263"/>
        <end position="279"/>
    </location>
</feature>
<organism>
    <name type="scientific">Cucumber mosaic virus (strain Trk7)</name>
    <name type="common">CMV</name>
    <dbReference type="NCBI Taxonomy" id="117127"/>
    <lineage>
        <taxon>Viruses</taxon>
        <taxon>Riboviria</taxon>
        <taxon>Orthornavirae</taxon>
        <taxon>Kitrinoviricota</taxon>
        <taxon>Alsuviricetes</taxon>
        <taxon>Martellivirales</taxon>
        <taxon>Bromoviridae</taxon>
        <taxon>Cucumovirus</taxon>
        <taxon>Cucumber mosaic virus</taxon>
    </lineage>
</organism>
<gene>
    <name type="ORF">ORF3a</name>
</gene>
<protein>
    <recommendedName>
        <fullName>Movement protein</fullName>
        <shortName>MP</shortName>
    </recommendedName>
    <alternativeName>
        <fullName>Protein 3A</fullName>
    </alternativeName>
</protein>